<accession>Q7VL11</accession>
<gene>
    <name evidence="1" type="primary">bioC</name>
    <name type="ordered locus">HD_1681</name>
</gene>
<feature type="chain" id="PRO_0000412500" description="Malonyl-[acyl-carrier protein] O-methyltransferase">
    <location>
        <begin position="1"/>
        <end position="258"/>
    </location>
</feature>
<reference key="1">
    <citation type="submission" date="2003-06" db="EMBL/GenBank/DDBJ databases">
        <title>The complete genome sequence of Haemophilus ducreyi.</title>
        <authorList>
            <person name="Munson R.S. Jr."/>
            <person name="Ray W.C."/>
            <person name="Mahairas G."/>
            <person name="Sabo P."/>
            <person name="Mungur R."/>
            <person name="Johnson L."/>
            <person name="Nguyen D."/>
            <person name="Wang J."/>
            <person name="Forst C."/>
            <person name="Hood L."/>
        </authorList>
    </citation>
    <scope>NUCLEOTIDE SEQUENCE [LARGE SCALE GENOMIC DNA]</scope>
    <source>
        <strain>35000HP / ATCC 700724</strain>
    </source>
</reference>
<evidence type="ECO:0000255" key="1">
    <source>
        <dbReference type="HAMAP-Rule" id="MF_00835"/>
    </source>
</evidence>
<keyword id="KW-0093">Biotin biosynthesis</keyword>
<keyword id="KW-0489">Methyltransferase</keyword>
<keyword id="KW-1185">Reference proteome</keyword>
<keyword id="KW-0949">S-adenosyl-L-methionine</keyword>
<keyword id="KW-0808">Transferase</keyword>
<name>BIOC_HAEDU</name>
<proteinExistence type="inferred from homology"/>
<dbReference type="EC" id="2.1.1.197" evidence="1"/>
<dbReference type="EMBL" id="AE017143">
    <property type="protein sequence ID" value="AAP96448.1"/>
    <property type="molecule type" value="Genomic_DNA"/>
</dbReference>
<dbReference type="RefSeq" id="WP_010945480.1">
    <property type="nucleotide sequence ID" value="NC_002940.2"/>
</dbReference>
<dbReference type="SMR" id="Q7VL11"/>
<dbReference type="STRING" id="233412.HD_1681"/>
<dbReference type="DNASU" id="1491540"/>
<dbReference type="KEGG" id="hdu:HD_1681"/>
<dbReference type="eggNOG" id="COG2226">
    <property type="taxonomic scope" value="Bacteria"/>
</dbReference>
<dbReference type="HOGENOM" id="CLU_046586_1_0_6"/>
<dbReference type="OrthoDB" id="9760689at2"/>
<dbReference type="UniPathway" id="UPA00078"/>
<dbReference type="Proteomes" id="UP000001022">
    <property type="component" value="Chromosome"/>
</dbReference>
<dbReference type="GO" id="GO:0010340">
    <property type="term" value="F:carboxyl-O-methyltransferase activity"/>
    <property type="evidence" value="ECO:0007669"/>
    <property type="project" value="UniProtKB-UniRule"/>
</dbReference>
<dbReference type="GO" id="GO:0102130">
    <property type="term" value="F:malonyl-CoA methyltransferase activity"/>
    <property type="evidence" value="ECO:0007669"/>
    <property type="project" value="UniProtKB-EC"/>
</dbReference>
<dbReference type="GO" id="GO:0008757">
    <property type="term" value="F:S-adenosylmethionine-dependent methyltransferase activity"/>
    <property type="evidence" value="ECO:0007669"/>
    <property type="project" value="InterPro"/>
</dbReference>
<dbReference type="GO" id="GO:0009102">
    <property type="term" value="P:biotin biosynthetic process"/>
    <property type="evidence" value="ECO:0007669"/>
    <property type="project" value="UniProtKB-UniRule"/>
</dbReference>
<dbReference type="GO" id="GO:0032259">
    <property type="term" value="P:methylation"/>
    <property type="evidence" value="ECO:0007669"/>
    <property type="project" value="UniProtKB-KW"/>
</dbReference>
<dbReference type="CDD" id="cd02440">
    <property type="entry name" value="AdoMet_MTases"/>
    <property type="match status" value="1"/>
</dbReference>
<dbReference type="Gene3D" id="3.40.50.150">
    <property type="entry name" value="Vaccinia Virus protein VP39"/>
    <property type="match status" value="1"/>
</dbReference>
<dbReference type="HAMAP" id="MF_00835">
    <property type="entry name" value="BioC"/>
    <property type="match status" value="1"/>
</dbReference>
<dbReference type="InterPro" id="IPR011814">
    <property type="entry name" value="BioC"/>
</dbReference>
<dbReference type="InterPro" id="IPR013216">
    <property type="entry name" value="Methyltransf_11"/>
</dbReference>
<dbReference type="InterPro" id="IPR029063">
    <property type="entry name" value="SAM-dependent_MTases_sf"/>
</dbReference>
<dbReference type="NCBIfam" id="TIGR02072">
    <property type="entry name" value="BioC"/>
    <property type="match status" value="1"/>
</dbReference>
<dbReference type="PANTHER" id="PTHR43861:SF1">
    <property type="entry name" value="TRANS-ACONITATE 2-METHYLTRANSFERASE"/>
    <property type="match status" value="1"/>
</dbReference>
<dbReference type="PANTHER" id="PTHR43861">
    <property type="entry name" value="TRANS-ACONITATE 2-METHYLTRANSFERASE-RELATED"/>
    <property type="match status" value="1"/>
</dbReference>
<dbReference type="Pfam" id="PF08241">
    <property type="entry name" value="Methyltransf_11"/>
    <property type="match status" value="1"/>
</dbReference>
<dbReference type="SUPFAM" id="SSF53335">
    <property type="entry name" value="S-adenosyl-L-methionine-dependent methyltransferases"/>
    <property type="match status" value="1"/>
</dbReference>
<sequence length="258" mass="29501">MAKLAKQLIAKRFVSHLTEYDQYAIAQQQINHQLVDLLQANTDKTFQRALEIGCGTGNLTEKLLAKIPIEHLTLNDFNAIYYPTVLQKIKQKKPLVVVDFMQGDAEQLVFTRNFDLVSAASVVQWFDSPQQFLRNSAYALKPGGVVLFNSFSPLNLQEIRQLTGIGLNYPTRLQWQEWLAQDFEQCQLIEQPIKLTFDSPLAVLIHLKKTGVTAVSNKPWNRHQIKQFCMEYQAHFACEQGVYLTYTPILMLGIKKNG</sequence>
<organism>
    <name type="scientific">Haemophilus ducreyi (strain 35000HP / ATCC 700724)</name>
    <dbReference type="NCBI Taxonomy" id="233412"/>
    <lineage>
        <taxon>Bacteria</taxon>
        <taxon>Pseudomonadati</taxon>
        <taxon>Pseudomonadota</taxon>
        <taxon>Gammaproteobacteria</taxon>
        <taxon>Pasteurellales</taxon>
        <taxon>Pasteurellaceae</taxon>
        <taxon>Haemophilus</taxon>
    </lineage>
</organism>
<protein>
    <recommendedName>
        <fullName evidence="1">Malonyl-[acyl-carrier protein] O-methyltransferase</fullName>
        <shortName evidence="1">Malonyl-ACP O-methyltransferase</shortName>
        <ecNumber evidence="1">2.1.1.197</ecNumber>
    </recommendedName>
    <alternativeName>
        <fullName evidence="1">Biotin synthesis protein BioC</fullName>
    </alternativeName>
</protein>
<comment type="function">
    <text evidence="1">Converts the free carboxyl group of a malonyl-thioester to its methyl ester by transfer of a methyl group from S-adenosyl-L-methionine (SAM). It allows to synthesize pimeloyl-ACP via the fatty acid synthetic pathway.</text>
</comment>
<comment type="catalytic activity">
    <reaction evidence="1">
        <text>malonyl-[ACP] + S-adenosyl-L-methionine = malonyl-[ACP] methyl ester + S-adenosyl-L-homocysteine</text>
        <dbReference type="Rhea" id="RHEA:17105"/>
        <dbReference type="Rhea" id="RHEA-COMP:9623"/>
        <dbReference type="Rhea" id="RHEA-COMP:9954"/>
        <dbReference type="ChEBI" id="CHEBI:57856"/>
        <dbReference type="ChEBI" id="CHEBI:59789"/>
        <dbReference type="ChEBI" id="CHEBI:78449"/>
        <dbReference type="ChEBI" id="CHEBI:78845"/>
        <dbReference type="EC" id="2.1.1.197"/>
    </reaction>
</comment>
<comment type="pathway">
    <text evidence="1">Cofactor biosynthesis; biotin biosynthesis.</text>
</comment>
<comment type="similarity">
    <text evidence="1">Belongs to the methyltransferase superfamily.</text>
</comment>